<keyword id="KW-0028">Amino-acid biosynthesis</keyword>
<keyword id="KW-0032">Aminotransferase</keyword>
<keyword id="KW-0150">Chloroplast</keyword>
<keyword id="KW-0934">Plastid</keyword>
<keyword id="KW-0663">Pyridoxal phosphate</keyword>
<keyword id="KW-0808">Transferase</keyword>
<keyword id="KW-0809">Transit peptide</keyword>
<sequence length="479" mass="51743">MAATTTTSSSSRIAYSRHNIPGLHSDSLNPKSISFSSNLHTFSLKSSGSRRQLYSRRTGAVVIMQSMDKVEVDISLSPRVNSVKPSKTVAITDQATALVQAGVPVIRLAAGEPDFDTPAPIVEAGINAIREGHTRYTPNAGTMELRSAISHKLKEENGLSYTPDQILVSNGAKQSIIQAVLAVCSPGDEVLIPAPYWVSYPEMARLADATPVILPTSISEDFLLDPKLLESKLTEKSRLLILCSPSNPTGSVYPRKLLEQIAEIVARHPRLLVISDEIYEHIIYAPATHTSFASLPGMWDRTLTVNGFSKAFAMTGWRLGYIAGPKHFIAACNKIQSQFTSGASSISQKAAVAALGLGYAGGELVATMVKSFRERRDYLVKSFGEIEGVKISEPRGAFYLFIDLSSYYGVEVDGFGSINNSESLCRYLLDKAQVALVPGDAFGDDTCIRISYAASLSTLQAAVERIKKALVTIKPPVPV</sequence>
<evidence type="ECO:0000250" key="1">
    <source>
        <dbReference type="UniProtKB" id="O84395"/>
    </source>
</evidence>
<evidence type="ECO:0000250" key="2">
    <source>
        <dbReference type="UniProtKB" id="P00509"/>
    </source>
</evidence>
<evidence type="ECO:0000250" key="3">
    <source>
        <dbReference type="UniProtKB" id="Q56232"/>
    </source>
</evidence>
<evidence type="ECO:0000250" key="4">
    <source>
        <dbReference type="UniProtKB" id="Q93ZN9"/>
    </source>
</evidence>
<evidence type="ECO:0000255" key="5"/>
<evidence type="ECO:0000269" key="6">
    <source>
    </source>
</evidence>
<evidence type="ECO:0000269" key="7">
    <source>
    </source>
</evidence>
<evidence type="ECO:0000303" key="8">
    <source>
    </source>
</evidence>
<evidence type="ECO:0000305" key="9"/>
<dbReference type="EC" id="2.6.1.1" evidence="6"/>
<dbReference type="EC" id="2.6.1.78" evidence="6"/>
<dbReference type="EC" id="2.6.1.79" evidence="6"/>
<dbReference type="EMBL" id="HM635905">
    <property type="protein sequence ID" value="ADM67557.1"/>
    <property type="molecule type" value="mRNA"/>
</dbReference>
<dbReference type="SMR" id="E9L7A5"/>
<dbReference type="SABIO-RK" id="E9L7A5"/>
<dbReference type="UniPathway" id="UPA00121">
    <property type="reaction ID" value="UER00342"/>
</dbReference>
<dbReference type="UniPathway" id="UPA00121">
    <property type="reaction ID" value="UER00343"/>
</dbReference>
<dbReference type="GO" id="GO:0009507">
    <property type="term" value="C:chloroplast"/>
    <property type="evidence" value="ECO:0007669"/>
    <property type="project" value="UniProtKB-SubCell"/>
</dbReference>
<dbReference type="GO" id="GO:0033853">
    <property type="term" value="F:aspartate-prephenate aminotransferase activity"/>
    <property type="evidence" value="ECO:0000314"/>
    <property type="project" value="UniProtKB"/>
</dbReference>
<dbReference type="GO" id="GO:0033854">
    <property type="term" value="F:glutamate-prephenate aminotransferase activity"/>
    <property type="evidence" value="ECO:0000314"/>
    <property type="project" value="UniProtKB"/>
</dbReference>
<dbReference type="GO" id="GO:0042802">
    <property type="term" value="F:identical protein binding"/>
    <property type="evidence" value="ECO:0000314"/>
    <property type="project" value="UniProtKB"/>
</dbReference>
<dbReference type="GO" id="GO:0004069">
    <property type="term" value="F:L-aspartate:2-oxoglutarate aminotransferase activity"/>
    <property type="evidence" value="ECO:0000314"/>
    <property type="project" value="UniProtKB"/>
</dbReference>
<dbReference type="GO" id="GO:0030170">
    <property type="term" value="F:pyridoxal phosphate binding"/>
    <property type="evidence" value="ECO:0000314"/>
    <property type="project" value="UniProtKB"/>
</dbReference>
<dbReference type="GO" id="GO:0009095">
    <property type="term" value="P:aromatic amino acid family biosynthetic process, prephenate pathway"/>
    <property type="evidence" value="ECO:0000314"/>
    <property type="project" value="UniProtKB"/>
</dbReference>
<dbReference type="GO" id="GO:0009094">
    <property type="term" value="P:L-phenylalanine biosynthetic process"/>
    <property type="evidence" value="ECO:0007669"/>
    <property type="project" value="UniProtKB-UniPathway"/>
</dbReference>
<dbReference type="CDD" id="cd00609">
    <property type="entry name" value="AAT_like"/>
    <property type="match status" value="1"/>
</dbReference>
<dbReference type="FunFam" id="3.40.640.10:FF:000033">
    <property type="entry name" value="Aspartate aminotransferase"/>
    <property type="match status" value="1"/>
</dbReference>
<dbReference type="Gene3D" id="3.90.1150.10">
    <property type="entry name" value="Aspartate Aminotransferase, domain 1"/>
    <property type="match status" value="1"/>
</dbReference>
<dbReference type="Gene3D" id="3.40.640.10">
    <property type="entry name" value="Type I PLP-dependent aspartate aminotransferase-like (Major domain)"/>
    <property type="match status" value="1"/>
</dbReference>
<dbReference type="InterPro" id="IPR004839">
    <property type="entry name" value="Aminotransferase_I/II_large"/>
</dbReference>
<dbReference type="InterPro" id="IPR050596">
    <property type="entry name" value="AspAT/PAT-like"/>
</dbReference>
<dbReference type="InterPro" id="IPR004838">
    <property type="entry name" value="NHTrfase_class1_PyrdxlP-BS"/>
</dbReference>
<dbReference type="InterPro" id="IPR015424">
    <property type="entry name" value="PyrdxlP-dep_Trfase"/>
</dbReference>
<dbReference type="InterPro" id="IPR015421">
    <property type="entry name" value="PyrdxlP-dep_Trfase_major"/>
</dbReference>
<dbReference type="InterPro" id="IPR015422">
    <property type="entry name" value="PyrdxlP-dep_Trfase_small"/>
</dbReference>
<dbReference type="PANTHER" id="PTHR46383">
    <property type="entry name" value="ASPARTATE AMINOTRANSFERASE"/>
    <property type="match status" value="1"/>
</dbReference>
<dbReference type="PANTHER" id="PTHR46383:SF1">
    <property type="entry name" value="ASPARTATE AMINOTRANSFERASE"/>
    <property type="match status" value="1"/>
</dbReference>
<dbReference type="Pfam" id="PF00155">
    <property type="entry name" value="Aminotran_1_2"/>
    <property type="match status" value="1"/>
</dbReference>
<dbReference type="SUPFAM" id="SSF53383">
    <property type="entry name" value="PLP-dependent transferases"/>
    <property type="match status" value="1"/>
</dbReference>
<dbReference type="PROSITE" id="PS00105">
    <property type="entry name" value="AA_TRANSFER_CLASS_1"/>
    <property type="match status" value="1"/>
</dbReference>
<proteinExistence type="evidence at protein level"/>
<feature type="transit peptide" description="Chloroplast" evidence="5">
    <location>
        <begin position="1"/>
        <end position="79"/>
    </location>
</feature>
<feature type="chain" id="PRO_0000418331" description="Bifunctional aspartate aminotransferase and glutamate/aspartate-prephenate aminotransferase">
    <location>
        <begin position="80"/>
        <end position="479"/>
    </location>
</feature>
<feature type="binding site" evidence="2">
    <location>
        <position position="111"/>
    </location>
    <ligand>
        <name>L-aspartate</name>
        <dbReference type="ChEBI" id="CHEBI:29991"/>
    </ligand>
</feature>
<feature type="binding site" evidence="1">
    <location>
        <begin position="172"/>
        <end position="173"/>
    </location>
    <ligand>
        <name>pyridoxal 5'-phosphate</name>
        <dbReference type="ChEBI" id="CHEBI:597326"/>
    </ligand>
</feature>
<feature type="binding site" evidence="3">
    <location>
        <position position="197"/>
    </location>
    <ligand>
        <name>L-aspartate</name>
        <dbReference type="ChEBI" id="CHEBI:29991"/>
    </ligand>
</feature>
<feature type="binding site" evidence="3">
    <location>
        <position position="247"/>
    </location>
    <ligand>
        <name>L-aspartate</name>
        <dbReference type="ChEBI" id="CHEBI:29991"/>
    </ligand>
</feature>
<feature type="binding site" evidence="1">
    <location>
        <position position="247"/>
    </location>
    <ligand>
        <name>pyridoxal 5'-phosphate</name>
        <dbReference type="ChEBI" id="CHEBI:597326"/>
    </ligand>
</feature>
<feature type="binding site" evidence="1">
    <location>
        <position position="279"/>
    </location>
    <ligand>
        <name>pyridoxal 5'-phosphate</name>
        <dbReference type="ChEBI" id="CHEBI:597326"/>
    </ligand>
</feature>
<feature type="binding site" evidence="1">
    <location>
        <begin position="307"/>
        <end position="309"/>
    </location>
    <ligand>
        <name>pyridoxal 5'-phosphate</name>
        <dbReference type="ChEBI" id="CHEBI:597326"/>
    </ligand>
</feature>
<feature type="binding site" evidence="4">
    <location>
        <position position="318"/>
    </location>
    <ligand>
        <name>pyridoxal 5'-phosphate</name>
        <dbReference type="ChEBI" id="CHEBI:597326"/>
    </ligand>
</feature>
<feature type="binding site" evidence="3">
    <location>
        <position position="449"/>
    </location>
    <ligand>
        <name>L-aspartate</name>
        <dbReference type="ChEBI" id="CHEBI:29991"/>
    </ligand>
</feature>
<feature type="site" description="Important for prephenate aminotransferase activity" evidence="3">
    <location>
        <position position="84"/>
    </location>
</feature>
<feature type="modified residue" description="N6-(pyridoxal phosphate)lysine" evidence="1">
    <location>
        <position position="310"/>
    </location>
</feature>
<accession>E9L7A5</accession>
<protein>
    <recommendedName>
        <fullName evidence="8">Bifunctional aspartate aminotransferase and glutamate/aspartate-prephenate aminotransferase</fullName>
        <shortName evidence="8">PhPPA-AT</shortName>
        <ecNumber evidence="6">2.6.1.1</ecNumber>
        <ecNumber evidence="6">2.6.1.78</ecNumber>
        <ecNumber evidence="6">2.6.1.79</ecNumber>
    </recommendedName>
</protein>
<name>PAT_PETHY</name>
<gene>
    <name evidence="8" type="primary">PPA-AT</name>
</gene>
<reference key="1">
    <citation type="journal article" date="2011" name="Nat. Chem. Biol.">
        <title>Prephenate aminotransferase directs plant phenylalanine biosynthesis via arogenate.</title>
        <authorList>
            <person name="Maeda H."/>
            <person name="Yoo H."/>
            <person name="Dudareva N."/>
        </authorList>
    </citation>
    <scope>NUCLEOTIDE SEQUENCE [MRNA]</scope>
    <scope>FUNCTION</scope>
    <scope>TISSUE SPECIFICITY</scope>
    <scope>BIOPHYSICOCHEMICAL PROPERTIES</scope>
    <scope>SUBUNIT</scope>
    <scope>COFACTOR</scope>
    <scope>CATALYTIC ACTIVITY</scope>
    <scope>PATHWAY</scope>
</reference>
<reference key="2">
    <citation type="journal article" date="2012" name="Plant Cell">
        <title>The R2R3-MYB-like regulatory factor EOBI, acting downstream of EOBII, regulates scent production by activating ODO1 and structural scent-related genes in petunia.</title>
        <authorList>
            <person name="Spitzer-Rimon B."/>
            <person name="Farhi M."/>
            <person name="Albo B."/>
            <person name="Cna'ani A."/>
            <person name="Ben Zvi M.M."/>
            <person name="Masci T."/>
            <person name="Edelbaum O."/>
            <person name="Yu Y."/>
            <person name="Shklarman E."/>
            <person name="Ovadis M."/>
            <person name="Vainstein A."/>
        </authorList>
    </citation>
    <scope>INDUCTION BY EOBI</scope>
    <source>
        <strain>cv. W115</strain>
    </source>
</reference>
<comment type="function">
    <text evidence="6">Prokaryotic-type aspartate aminotransferase. Also has a prenate transaminase activity (PubMed:21102469). Involved in the aromatic amino acids biosynthesis pathway via the arogenate route (PubMed:21102469). Required for the transamination of prephenate into arogenate (PubMed:21102469). Can use 2-oxoglutarate, oxaloacetate and prephenate as substrates, but not phenylpyruvate or 4-hydroxyphenylpyruvate (PubMed:21102469).</text>
</comment>
<comment type="catalytic activity">
    <reaction evidence="6">
        <text>L-aspartate + 2-oxoglutarate = oxaloacetate + L-glutamate</text>
        <dbReference type="Rhea" id="RHEA:21824"/>
        <dbReference type="ChEBI" id="CHEBI:16452"/>
        <dbReference type="ChEBI" id="CHEBI:16810"/>
        <dbReference type="ChEBI" id="CHEBI:29985"/>
        <dbReference type="ChEBI" id="CHEBI:29991"/>
        <dbReference type="EC" id="2.6.1.1"/>
    </reaction>
</comment>
<comment type="catalytic activity">
    <reaction evidence="6">
        <text>L-arogenate + oxaloacetate = prephenate + L-aspartate</text>
        <dbReference type="Rhea" id="RHEA:20445"/>
        <dbReference type="ChEBI" id="CHEBI:16452"/>
        <dbReference type="ChEBI" id="CHEBI:29934"/>
        <dbReference type="ChEBI" id="CHEBI:29991"/>
        <dbReference type="ChEBI" id="CHEBI:58180"/>
        <dbReference type="EC" id="2.6.1.78"/>
    </reaction>
    <physiologicalReaction direction="right-to-left" evidence="6">
        <dbReference type="Rhea" id="RHEA:20447"/>
    </physiologicalReaction>
</comment>
<comment type="catalytic activity">
    <reaction evidence="6">
        <text>L-arogenate + 2-oxoglutarate = prephenate + L-glutamate</text>
        <dbReference type="Rhea" id="RHEA:22880"/>
        <dbReference type="ChEBI" id="CHEBI:16810"/>
        <dbReference type="ChEBI" id="CHEBI:29934"/>
        <dbReference type="ChEBI" id="CHEBI:29985"/>
        <dbReference type="ChEBI" id="CHEBI:58180"/>
        <dbReference type="EC" id="2.6.1.79"/>
    </reaction>
    <physiologicalReaction direction="right-to-left" evidence="6">
        <dbReference type="Rhea" id="RHEA:22882"/>
    </physiologicalReaction>
</comment>
<comment type="cofactor">
    <cofactor evidence="6">
        <name>pyridoxal 5'-phosphate</name>
        <dbReference type="ChEBI" id="CHEBI:597326"/>
    </cofactor>
</comment>
<comment type="biophysicochemical properties">
    <kinetics>
        <KM evidence="6">317 uM for prephenate (with 20 mM aspartate as cosubstrate)</KM>
        <KM evidence="6">478 uM for prephenate (with 20 mM glutamate as cosubstrate)</KM>
        <KM evidence="6">1045 uM for 2-oxoglutarate (with 20 mM aspartate as cosubstrate)</KM>
        <KM evidence="6">3328 uM for glutamate (with 3 mM prephenate as cosubstrate)</KM>
        <KM evidence="6">3238 uM for aspartate (with 3 mM prephenate as cosubstrate)</KM>
        <KM evidence="6">2060 uM for arogenate (with 20 mM 2-oxoglutarate as cosubstrate)</KM>
        <KM evidence="6">11629 uM for oxaloacetate (with 20 mM glutamate as cosubstrate)</KM>
        <Vmax evidence="6">115.0 nmol/sec/mg enzyme toward prephenate with 20 mM aspartate as cosubstrate</Vmax>
        <Vmax evidence="6">253.0 nmol/sec/mg enzyme toward prephenate with 20 mM glutamate as cosubstrate</Vmax>
        <Vmax evidence="6">654.0 nmol/sec/mg enzyme toward 2-oxoglutarate with 20 mM aspartate as cosubstrate</Vmax>
        <Vmax evidence="6">85.0 nmol/sec/mg enzyme toward glutamate with 3 mM prephenate as cosubstrate</Vmax>
        <Vmax evidence="6">81.0 nmol/sec/mg enzyme toward aspartate with 3 mM prephenate as cosubstrate</Vmax>
        <Vmax evidence="6">120.0 nmol/sec/mg enzyme toward arogenate with 20 mM 2-oxoglutarate as cosubstrate</Vmax>
        <Vmax evidence="6">1057.0 nmol/sec/mg enzyme toward oxaloacetate with 20 mM glutamate as cosubstrate</Vmax>
    </kinetics>
</comment>
<comment type="pathway">
    <text evidence="6">Amino-acid biosynthesis; L-phenylalanine biosynthesis; L-arogenate from prephenate (L-Asp route): step 1/1.</text>
</comment>
<comment type="pathway">
    <text evidence="6">Amino-acid biosynthesis; L-phenylalanine biosynthesis; L-arogenate from prephenate (L-Glu route): step 1/1.</text>
</comment>
<comment type="subunit">
    <text evidence="6">Homodimer.</text>
</comment>
<comment type="subcellular location">
    <subcellularLocation>
        <location evidence="9">Plastid</location>
        <location evidence="9">Chloroplast</location>
    </subcellularLocation>
</comment>
<comment type="tissue specificity">
    <text evidence="6">Expressed in flowers, pistils, stamens, ovaries and at lower levels in leaves and sepals.</text>
</comment>
<comment type="induction">
    <text evidence="7">Triggered by EOBI in flowers.</text>
</comment>
<comment type="similarity">
    <text evidence="9">Belongs to the class-I pyridoxal-phosphate-dependent aminotransferase family.</text>
</comment>
<organism>
    <name type="scientific">Petunia hybrida</name>
    <name type="common">Petunia</name>
    <dbReference type="NCBI Taxonomy" id="4102"/>
    <lineage>
        <taxon>Eukaryota</taxon>
        <taxon>Viridiplantae</taxon>
        <taxon>Streptophyta</taxon>
        <taxon>Embryophyta</taxon>
        <taxon>Tracheophyta</taxon>
        <taxon>Spermatophyta</taxon>
        <taxon>Magnoliopsida</taxon>
        <taxon>eudicotyledons</taxon>
        <taxon>Gunneridae</taxon>
        <taxon>Pentapetalae</taxon>
        <taxon>asterids</taxon>
        <taxon>lamiids</taxon>
        <taxon>Solanales</taxon>
        <taxon>Solanaceae</taxon>
        <taxon>Petunioideae</taxon>
        <taxon>Petunia</taxon>
    </lineage>
</organism>